<comment type="catalytic activity">
    <reaction evidence="1">
        <text>agmatine + H2O = N-carbamoylputrescine + NH4(+)</text>
        <dbReference type="Rhea" id="RHEA:18037"/>
        <dbReference type="ChEBI" id="CHEBI:15377"/>
        <dbReference type="ChEBI" id="CHEBI:28938"/>
        <dbReference type="ChEBI" id="CHEBI:58145"/>
        <dbReference type="ChEBI" id="CHEBI:58318"/>
        <dbReference type="EC" id="3.5.3.12"/>
    </reaction>
</comment>
<comment type="similarity">
    <text evidence="1">Belongs to the agmatine deiminase family.</text>
</comment>
<proteinExistence type="inferred from homology"/>
<keyword id="KW-0378">Hydrolase</keyword>
<keyword id="KW-1185">Reference proteome</keyword>
<protein>
    <recommendedName>
        <fullName evidence="1">Putative agmatine deiminase</fullName>
        <ecNumber evidence="1">3.5.3.12</ecNumber>
    </recommendedName>
    <alternativeName>
        <fullName evidence="1">Agmatine iminohydrolase</fullName>
    </alternativeName>
</protein>
<evidence type="ECO:0000255" key="1">
    <source>
        <dbReference type="HAMAP-Rule" id="MF_01841"/>
    </source>
</evidence>
<dbReference type="EC" id="3.5.3.12" evidence="1"/>
<dbReference type="EMBL" id="AE005176">
    <property type="protein sequence ID" value="AAK05795.1"/>
    <property type="molecule type" value="Genomic_DNA"/>
</dbReference>
<dbReference type="PIR" id="A86837">
    <property type="entry name" value="A86837"/>
</dbReference>
<dbReference type="RefSeq" id="NP_267853.1">
    <property type="nucleotide sequence ID" value="NC_002662.1"/>
</dbReference>
<dbReference type="RefSeq" id="WP_003130391.1">
    <property type="nucleotide sequence ID" value="NC_002662.1"/>
</dbReference>
<dbReference type="SMR" id="Q9CEY6"/>
<dbReference type="PaxDb" id="272623-L136332"/>
<dbReference type="EnsemblBacteria" id="AAK05795">
    <property type="protein sequence ID" value="AAK05795"/>
    <property type="gene ID" value="L136332"/>
</dbReference>
<dbReference type="KEGG" id="lla:L136332"/>
<dbReference type="PATRIC" id="fig|272623.7.peg.1821"/>
<dbReference type="eggNOG" id="COG2957">
    <property type="taxonomic scope" value="Bacteria"/>
</dbReference>
<dbReference type="HOGENOM" id="CLU_037682_1_0_9"/>
<dbReference type="OrthoDB" id="9808013at2"/>
<dbReference type="Proteomes" id="UP000002196">
    <property type="component" value="Chromosome"/>
</dbReference>
<dbReference type="GO" id="GO:0047632">
    <property type="term" value="F:agmatine deiminase activity"/>
    <property type="evidence" value="ECO:0007669"/>
    <property type="project" value="UniProtKB-UniRule"/>
</dbReference>
<dbReference type="GO" id="GO:0004668">
    <property type="term" value="F:protein-arginine deiminase activity"/>
    <property type="evidence" value="ECO:0007669"/>
    <property type="project" value="InterPro"/>
</dbReference>
<dbReference type="GO" id="GO:0009446">
    <property type="term" value="P:putrescine biosynthetic process"/>
    <property type="evidence" value="ECO:0007669"/>
    <property type="project" value="InterPro"/>
</dbReference>
<dbReference type="Gene3D" id="3.75.10.10">
    <property type="entry name" value="L-arginine/glycine Amidinotransferase, Chain A"/>
    <property type="match status" value="1"/>
</dbReference>
<dbReference type="HAMAP" id="MF_01841">
    <property type="entry name" value="Agmatine_deimin"/>
    <property type="match status" value="1"/>
</dbReference>
<dbReference type="InterPro" id="IPR017754">
    <property type="entry name" value="Agmatine_deiminase"/>
</dbReference>
<dbReference type="InterPro" id="IPR007466">
    <property type="entry name" value="Peptidyl-Arg-deiminase_porph"/>
</dbReference>
<dbReference type="NCBIfam" id="TIGR03380">
    <property type="entry name" value="agmatine_aguA"/>
    <property type="match status" value="1"/>
</dbReference>
<dbReference type="NCBIfam" id="NF010070">
    <property type="entry name" value="PRK13551.1"/>
    <property type="match status" value="1"/>
</dbReference>
<dbReference type="PANTHER" id="PTHR31377">
    <property type="entry name" value="AGMATINE DEIMINASE-RELATED"/>
    <property type="match status" value="1"/>
</dbReference>
<dbReference type="PANTHER" id="PTHR31377:SF0">
    <property type="entry name" value="AGMATINE DEIMINASE-RELATED"/>
    <property type="match status" value="1"/>
</dbReference>
<dbReference type="Pfam" id="PF04371">
    <property type="entry name" value="PAD_porph"/>
    <property type="match status" value="1"/>
</dbReference>
<dbReference type="SUPFAM" id="SSF55909">
    <property type="entry name" value="Pentein"/>
    <property type="match status" value="1"/>
</dbReference>
<gene>
    <name evidence="1" type="primary">aguA</name>
    <name type="ordered locus">LL1697</name>
    <name type="ORF">L136332</name>
</gene>
<organism>
    <name type="scientific">Lactococcus lactis subsp. lactis (strain IL1403)</name>
    <name type="common">Streptococcus lactis</name>
    <dbReference type="NCBI Taxonomy" id="272623"/>
    <lineage>
        <taxon>Bacteria</taxon>
        <taxon>Bacillati</taxon>
        <taxon>Bacillota</taxon>
        <taxon>Bacilli</taxon>
        <taxon>Lactobacillales</taxon>
        <taxon>Streptococcaceae</taxon>
        <taxon>Lactococcus</taxon>
    </lineage>
</organism>
<reference key="1">
    <citation type="journal article" date="2001" name="Genome Res.">
        <title>The complete genome sequence of the lactic acid bacterium Lactococcus lactis ssp. lactis IL1403.</title>
        <authorList>
            <person name="Bolotin A."/>
            <person name="Wincker P."/>
            <person name="Mauger S."/>
            <person name="Jaillon O."/>
            <person name="Malarme K."/>
            <person name="Weissenbach J."/>
            <person name="Ehrlich S.D."/>
            <person name="Sorokin A."/>
        </authorList>
    </citation>
    <scope>NUCLEOTIDE SEQUENCE [LARGE SCALE GENOMIC DNA]</scope>
    <source>
        <strain>IL1403</strain>
    </source>
</reference>
<sequence>MAKRIIGTTPKEDGFRMPGEFEAQDQIFMIWPERPDNWRDGAKPVQIAFTNVAKAISRFTPVTMLVSQSQYQNARYQLPADVRVLEVSNNDSWVRDCGPSFVINDKGELRANDWTFNAWGGLVDGLYFPWDQDDLVAQKVCELERVDSYRTDDFVLEGGSFHVDGQGTVLTTEMCLLSEGRNPHMSKEDIENKLKEHLNAEKILWLGDGIDPEETNGHVDDVACFVAPGEVACIYTEDEKSPFYEAAQDAYKRLNQMTDAKGRQLKVHKLTCPAKNVTIKKQFRIDTVEGTMPREDGDICIASYMNFLITNKGVIVPQYGDENDALALKQVQEMFPDREIVGVNTVEVVYGGGNIHCITQQQPKAK</sequence>
<accession>Q9CEY6</accession>
<name>AGUA_LACLA</name>
<feature type="chain" id="PRO_0000194326" description="Putative agmatine deiminase">
    <location>
        <begin position="1"/>
        <end position="366"/>
    </location>
</feature>
<feature type="active site" description="Amidino-cysteine intermediate" evidence="1">
    <location>
        <position position="357"/>
    </location>
</feature>